<dbReference type="EMBL" id="Y08701">
    <property type="protein sequence ID" value="CAA69960.1"/>
    <property type="molecule type" value="mRNA"/>
</dbReference>
<dbReference type="EMBL" id="AY129403">
    <property type="protein sequence ID" value="AAN05017.1"/>
    <property type="molecule type" value="Genomic_DNA"/>
</dbReference>
<dbReference type="EMBL" id="AK030978">
    <property type="protein sequence ID" value="BAC27200.1"/>
    <property type="molecule type" value="mRNA"/>
</dbReference>
<dbReference type="RefSeq" id="NP_032917.2">
    <property type="nucleotide sequence ID" value="NM_008891.2"/>
</dbReference>
<dbReference type="SMR" id="O35691"/>
<dbReference type="BioGRID" id="202283">
    <property type="interactions" value="15"/>
</dbReference>
<dbReference type="FunCoup" id="O35691">
    <property type="interactions" value="2563"/>
</dbReference>
<dbReference type="IntAct" id="O35691">
    <property type="interactions" value="3"/>
</dbReference>
<dbReference type="STRING" id="10090.ENSMUSP00000021381"/>
<dbReference type="GlyGen" id="O35691">
    <property type="glycosylation" value="1 site, 1 O-linked glycan (1 site)"/>
</dbReference>
<dbReference type="iPTMnet" id="O35691"/>
<dbReference type="PhosphoSitePlus" id="O35691"/>
<dbReference type="jPOST" id="O35691"/>
<dbReference type="PaxDb" id="10090-ENSMUSP00000021381"/>
<dbReference type="PeptideAtlas" id="O35691"/>
<dbReference type="ProteomicsDB" id="289576"/>
<dbReference type="Pumba" id="O35691"/>
<dbReference type="DNASU" id="18949"/>
<dbReference type="GeneID" id="18949"/>
<dbReference type="KEGG" id="mmu:18949"/>
<dbReference type="AGR" id="MGI:1100514"/>
<dbReference type="CTD" id="5411"/>
<dbReference type="MGI" id="MGI:1100514">
    <property type="gene designation" value="Pnn"/>
</dbReference>
<dbReference type="eggNOG" id="KOG3756">
    <property type="taxonomic scope" value="Eukaryota"/>
</dbReference>
<dbReference type="InParanoid" id="O35691"/>
<dbReference type="OrthoDB" id="330772at2759"/>
<dbReference type="PhylomeDB" id="O35691"/>
<dbReference type="Reactome" id="R-MMU-72163">
    <property type="pathway name" value="mRNA Splicing - Major Pathway"/>
</dbReference>
<dbReference type="BioGRID-ORCS" id="18949">
    <property type="hits" value="28 hits in 81 CRISPR screens"/>
</dbReference>
<dbReference type="ChiTaRS" id="Pnn">
    <property type="organism name" value="mouse"/>
</dbReference>
<dbReference type="PRO" id="PR:O35691"/>
<dbReference type="Proteomes" id="UP000000589">
    <property type="component" value="Unplaced"/>
</dbReference>
<dbReference type="RNAct" id="O35691">
    <property type="molecule type" value="protein"/>
</dbReference>
<dbReference type="GO" id="GO:0005737">
    <property type="term" value="C:cytoplasm"/>
    <property type="evidence" value="ECO:0000314"/>
    <property type="project" value="MGI"/>
</dbReference>
<dbReference type="GO" id="GO:0030057">
    <property type="term" value="C:desmosome"/>
    <property type="evidence" value="ECO:0000266"/>
    <property type="project" value="MGI"/>
</dbReference>
<dbReference type="GO" id="GO:0016607">
    <property type="term" value="C:nuclear speck"/>
    <property type="evidence" value="ECO:0000314"/>
    <property type="project" value="MGI"/>
</dbReference>
<dbReference type="GO" id="GO:0005681">
    <property type="term" value="C:spliceosomal complex"/>
    <property type="evidence" value="ECO:0007669"/>
    <property type="project" value="UniProtKB-KW"/>
</dbReference>
<dbReference type="GO" id="GO:0003677">
    <property type="term" value="F:DNA binding"/>
    <property type="evidence" value="ECO:0007669"/>
    <property type="project" value="UniProtKB-KW"/>
</dbReference>
<dbReference type="GO" id="GO:0098609">
    <property type="term" value="P:cell-cell adhesion"/>
    <property type="evidence" value="ECO:0000266"/>
    <property type="project" value="MGI"/>
</dbReference>
<dbReference type="GO" id="GO:0006397">
    <property type="term" value="P:mRNA processing"/>
    <property type="evidence" value="ECO:0007669"/>
    <property type="project" value="UniProtKB-KW"/>
</dbReference>
<dbReference type="GO" id="GO:0008380">
    <property type="term" value="P:RNA splicing"/>
    <property type="evidence" value="ECO:0007669"/>
    <property type="project" value="UniProtKB-KW"/>
</dbReference>
<dbReference type="InterPro" id="IPR039853">
    <property type="entry name" value="Pinin"/>
</dbReference>
<dbReference type="InterPro" id="IPR006786">
    <property type="entry name" value="Pinin_SDK_MemA"/>
</dbReference>
<dbReference type="InterPro" id="IPR006787">
    <property type="entry name" value="Pinin_SDK_N"/>
</dbReference>
<dbReference type="PANTHER" id="PTHR12707:SF0">
    <property type="entry name" value="PININ"/>
    <property type="match status" value="1"/>
</dbReference>
<dbReference type="PANTHER" id="PTHR12707">
    <property type="entry name" value="PINN"/>
    <property type="match status" value="1"/>
</dbReference>
<dbReference type="Pfam" id="PF04696">
    <property type="entry name" value="Pinin_SDK_memA"/>
    <property type="match status" value="1"/>
</dbReference>
<dbReference type="Pfam" id="PF04697">
    <property type="entry name" value="Pinin_SDK_N"/>
    <property type="match status" value="1"/>
</dbReference>
<keyword id="KW-0007">Acetylation</keyword>
<keyword id="KW-0010">Activator</keyword>
<keyword id="KW-0965">Cell junction</keyword>
<keyword id="KW-0175">Coiled coil</keyword>
<keyword id="KW-0238">DNA-binding</keyword>
<keyword id="KW-1017">Isopeptide bond</keyword>
<keyword id="KW-0488">Methylation</keyword>
<keyword id="KW-0507">mRNA processing</keyword>
<keyword id="KW-0508">mRNA splicing</keyword>
<keyword id="KW-0539">Nucleus</keyword>
<keyword id="KW-0597">Phosphoprotein</keyword>
<keyword id="KW-1185">Reference proteome</keyword>
<keyword id="KW-0747">Spliceosome</keyword>
<keyword id="KW-0804">Transcription</keyword>
<keyword id="KW-0805">Transcription regulation</keyword>
<keyword id="KW-0832">Ubl conjugation</keyword>
<protein>
    <recommendedName>
        <fullName>Pinin</fullName>
    </recommendedName>
</protein>
<evidence type="ECO:0000250" key="1"/>
<evidence type="ECO:0000250" key="2">
    <source>
        <dbReference type="UniProtKB" id="Q9H307"/>
    </source>
</evidence>
<evidence type="ECO:0000255" key="3"/>
<evidence type="ECO:0000256" key="4">
    <source>
        <dbReference type="SAM" id="MobiDB-lite"/>
    </source>
</evidence>
<evidence type="ECO:0000305" key="5"/>
<evidence type="ECO:0007744" key="6">
    <source>
    </source>
</evidence>
<evidence type="ECO:0007744" key="7">
    <source>
    </source>
</evidence>
<evidence type="ECO:0007744" key="8">
    <source>
    </source>
</evidence>
<evidence type="ECO:0007744" key="9">
    <source>
    </source>
</evidence>
<evidence type="ECO:0007744" key="10">
    <source>
    </source>
</evidence>
<evidence type="ECO:0007744" key="11">
    <source>
    </source>
</evidence>
<reference key="1">
    <citation type="journal article" date="1997" name="Gene">
        <title>Cloning and analysis of cDNA encoding murine pinin.</title>
        <authorList>
            <person name="Ouyang P."/>
            <person name="Zhen Y.Y."/>
            <person name="Sugrue S.P."/>
        </authorList>
    </citation>
    <scope>NUCLEOTIDE SEQUENCE [MRNA]</scope>
    <source>
        <tissue>Embryo</tissue>
    </source>
</reference>
<reference key="2">
    <citation type="submission" date="2002-07" db="EMBL/GenBank/DDBJ databases">
        <title>Mouse pinin gene.</title>
        <authorList>
            <person name="Leu S."/>
            <person name="Ouyang P."/>
        </authorList>
    </citation>
    <scope>NUCLEOTIDE SEQUENCE [GENOMIC DNA]</scope>
    <source>
        <strain>129/SvJ</strain>
    </source>
</reference>
<reference key="3">
    <citation type="journal article" date="2005" name="Science">
        <title>The transcriptional landscape of the mammalian genome.</title>
        <authorList>
            <person name="Carninci P."/>
            <person name="Kasukawa T."/>
            <person name="Katayama S."/>
            <person name="Gough J."/>
            <person name="Frith M.C."/>
            <person name="Maeda N."/>
            <person name="Oyama R."/>
            <person name="Ravasi T."/>
            <person name="Lenhard B."/>
            <person name="Wells C."/>
            <person name="Kodzius R."/>
            <person name="Shimokawa K."/>
            <person name="Bajic V.B."/>
            <person name="Brenner S.E."/>
            <person name="Batalov S."/>
            <person name="Forrest A.R."/>
            <person name="Zavolan M."/>
            <person name="Davis M.J."/>
            <person name="Wilming L.G."/>
            <person name="Aidinis V."/>
            <person name="Allen J.E."/>
            <person name="Ambesi-Impiombato A."/>
            <person name="Apweiler R."/>
            <person name="Aturaliya R.N."/>
            <person name="Bailey T.L."/>
            <person name="Bansal M."/>
            <person name="Baxter L."/>
            <person name="Beisel K.W."/>
            <person name="Bersano T."/>
            <person name="Bono H."/>
            <person name="Chalk A.M."/>
            <person name="Chiu K.P."/>
            <person name="Choudhary V."/>
            <person name="Christoffels A."/>
            <person name="Clutterbuck D.R."/>
            <person name="Crowe M.L."/>
            <person name="Dalla E."/>
            <person name="Dalrymple B.P."/>
            <person name="de Bono B."/>
            <person name="Della Gatta G."/>
            <person name="di Bernardo D."/>
            <person name="Down T."/>
            <person name="Engstrom P."/>
            <person name="Fagiolini M."/>
            <person name="Faulkner G."/>
            <person name="Fletcher C.F."/>
            <person name="Fukushima T."/>
            <person name="Furuno M."/>
            <person name="Futaki S."/>
            <person name="Gariboldi M."/>
            <person name="Georgii-Hemming P."/>
            <person name="Gingeras T.R."/>
            <person name="Gojobori T."/>
            <person name="Green R.E."/>
            <person name="Gustincich S."/>
            <person name="Harbers M."/>
            <person name="Hayashi Y."/>
            <person name="Hensch T.K."/>
            <person name="Hirokawa N."/>
            <person name="Hill D."/>
            <person name="Huminiecki L."/>
            <person name="Iacono M."/>
            <person name="Ikeo K."/>
            <person name="Iwama A."/>
            <person name="Ishikawa T."/>
            <person name="Jakt M."/>
            <person name="Kanapin A."/>
            <person name="Katoh M."/>
            <person name="Kawasawa Y."/>
            <person name="Kelso J."/>
            <person name="Kitamura H."/>
            <person name="Kitano H."/>
            <person name="Kollias G."/>
            <person name="Krishnan S.P."/>
            <person name="Kruger A."/>
            <person name="Kummerfeld S.K."/>
            <person name="Kurochkin I.V."/>
            <person name="Lareau L.F."/>
            <person name="Lazarevic D."/>
            <person name="Lipovich L."/>
            <person name="Liu J."/>
            <person name="Liuni S."/>
            <person name="McWilliam S."/>
            <person name="Madan Babu M."/>
            <person name="Madera M."/>
            <person name="Marchionni L."/>
            <person name="Matsuda H."/>
            <person name="Matsuzawa S."/>
            <person name="Miki H."/>
            <person name="Mignone F."/>
            <person name="Miyake S."/>
            <person name="Morris K."/>
            <person name="Mottagui-Tabar S."/>
            <person name="Mulder N."/>
            <person name="Nakano N."/>
            <person name="Nakauchi H."/>
            <person name="Ng P."/>
            <person name="Nilsson R."/>
            <person name="Nishiguchi S."/>
            <person name="Nishikawa S."/>
            <person name="Nori F."/>
            <person name="Ohara O."/>
            <person name="Okazaki Y."/>
            <person name="Orlando V."/>
            <person name="Pang K.C."/>
            <person name="Pavan W.J."/>
            <person name="Pavesi G."/>
            <person name="Pesole G."/>
            <person name="Petrovsky N."/>
            <person name="Piazza S."/>
            <person name="Reed J."/>
            <person name="Reid J.F."/>
            <person name="Ring B.Z."/>
            <person name="Ringwald M."/>
            <person name="Rost B."/>
            <person name="Ruan Y."/>
            <person name="Salzberg S.L."/>
            <person name="Sandelin A."/>
            <person name="Schneider C."/>
            <person name="Schoenbach C."/>
            <person name="Sekiguchi K."/>
            <person name="Semple C.A."/>
            <person name="Seno S."/>
            <person name="Sessa L."/>
            <person name="Sheng Y."/>
            <person name="Shibata Y."/>
            <person name="Shimada H."/>
            <person name="Shimada K."/>
            <person name="Silva D."/>
            <person name="Sinclair B."/>
            <person name="Sperling S."/>
            <person name="Stupka E."/>
            <person name="Sugiura K."/>
            <person name="Sultana R."/>
            <person name="Takenaka Y."/>
            <person name="Taki K."/>
            <person name="Tammoja K."/>
            <person name="Tan S.L."/>
            <person name="Tang S."/>
            <person name="Taylor M.S."/>
            <person name="Tegner J."/>
            <person name="Teichmann S.A."/>
            <person name="Ueda H.R."/>
            <person name="van Nimwegen E."/>
            <person name="Verardo R."/>
            <person name="Wei C.L."/>
            <person name="Yagi K."/>
            <person name="Yamanishi H."/>
            <person name="Zabarovsky E."/>
            <person name="Zhu S."/>
            <person name="Zimmer A."/>
            <person name="Hide W."/>
            <person name="Bult C."/>
            <person name="Grimmond S.M."/>
            <person name="Teasdale R.D."/>
            <person name="Liu E.T."/>
            <person name="Brusic V."/>
            <person name="Quackenbush J."/>
            <person name="Wahlestedt C."/>
            <person name="Mattick J.S."/>
            <person name="Hume D.A."/>
            <person name="Kai C."/>
            <person name="Sasaki D."/>
            <person name="Tomaru Y."/>
            <person name="Fukuda S."/>
            <person name="Kanamori-Katayama M."/>
            <person name="Suzuki M."/>
            <person name="Aoki J."/>
            <person name="Arakawa T."/>
            <person name="Iida J."/>
            <person name="Imamura K."/>
            <person name="Itoh M."/>
            <person name="Kato T."/>
            <person name="Kawaji H."/>
            <person name="Kawagashira N."/>
            <person name="Kawashima T."/>
            <person name="Kojima M."/>
            <person name="Kondo S."/>
            <person name="Konno H."/>
            <person name="Nakano K."/>
            <person name="Ninomiya N."/>
            <person name="Nishio T."/>
            <person name="Okada M."/>
            <person name="Plessy C."/>
            <person name="Shibata K."/>
            <person name="Shiraki T."/>
            <person name="Suzuki S."/>
            <person name="Tagami M."/>
            <person name="Waki K."/>
            <person name="Watahiki A."/>
            <person name="Okamura-Oho Y."/>
            <person name="Suzuki H."/>
            <person name="Kawai J."/>
            <person name="Hayashizaki Y."/>
        </authorList>
    </citation>
    <scope>NUCLEOTIDE SEQUENCE [LARGE SCALE MRNA]</scope>
    <source>
        <strain>C57BL/6J</strain>
        <tissue>Thymus</tissue>
    </source>
</reference>
<reference key="4">
    <citation type="journal article" date="2007" name="Proc. Natl. Acad. Sci. U.S.A.">
        <title>Large-scale phosphorylation analysis of mouse liver.</title>
        <authorList>
            <person name="Villen J."/>
            <person name="Beausoleil S.A."/>
            <person name="Gerber S.A."/>
            <person name="Gygi S.P."/>
        </authorList>
    </citation>
    <scope>PHOSPHORYLATION [LARGE SCALE ANALYSIS] AT SER-66</scope>
    <scope>IDENTIFICATION BY MASS SPECTROMETRY [LARGE SCALE ANALYSIS]</scope>
    <source>
        <tissue>Liver</tissue>
    </source>
</reference>
<reference key="5">
    <citation type="journal article" date="2009" name="Immunity">
        <title>The phagosomal proteome in interferon-gamma-activated macrophages.</title>
        <authorList>
            <person name="Trost M."/>
            <person name="English L."/>
            <person name="Lemieux S."/>
            <person name="Courcelles M."/>
            <person name="Desjardins M."/>
            <person name="Thibault P."/>
        </authorList>
    </citation>
    <scope>PHOSPHORYLATION [LARGE SCALE ANALYSIS] AT SER-66</scope>
    <scope>IDENTIFICATION BY MASS SPECTROMETRY [LARGE SCALE ANALYSIS]</scope>
</reference>
<reference key="6">
    <citation type="journal article" date="2009" name="Mol. Cell. Proteomics">
        <title>Large scale localization of protein phosphorylation by use of electron capture dissociation mass spectrometry.</title>
        <authorList>
            <person name="Sweet S.M."/>
            <person name="Bailey C.M."/>
            <person name="Cunningham D.L."/>
            <person name="Heath J.K."/>
            <person name="Cooper H.J."/>
        </authorList>
    </citation>
    <scope>PHOSPHORYLATION [LARGE SCALE ANALYSIS] AT SER-380</scope>
    <scope>IDENTIFICATION BY MASS SPECTROMETRY [LARGE SCALE ANALYSIS]</scope>
    <source>
        <tissue>Embryonic fibroblast</tissue>
    </source>
</reference>
<reference key="7">
    <citation type="journal article" date="2010" name="Cell">
        <title>A tissue-specific atlas of mouse protein phosphorylation and expression.</title>
        <authorList>
            <person name="Huttlin E.L."/>
            <person name="Jedrychowski M.P."/>
            <person name="Elias J.E."/>
            <person name="Goswami T."/>
            <person name="Rad R."/>
            <person name="Beausoleil S.A."/>
            <person name="Villen J."/>
            <person name="Haas W."/>
            <person name="Sowa M.E."/>
            <person name="Gygi S.P."/>
        </authorList>
    </citation>
    <scope>PHOSPHORYLATION [LARGE SCALE ANALYSIS] AT SER-66; SER-380 AND SER-442</scope>
    <scope>IDENTIFICATION BY MASS SPECTROMETRY [LARGE SCALE ANALYSIS]</scope>
    <source>
        <tissue>Brain</tissue>
        <tissue>Brown adipose tissue</tissue>
        <tissue>Kidney</tissue>
        <tissue>Lung</tissue>
        <tissue>Spleen</tissue>
        <tissue>Testis</tissue>
    </source>
</reference>
<reference key="8">
    <citation type="journal article" date="2013" name="Mol. Cell">
        <title>SIRT5-mediated lysine desuccinylation impacts diverse metabolic pathways.</title>
        <authorList>
            <person name="Park J."/>
            <person name="Chen Y."/>
            <person name="Tishkoff D.X."/>
            <person name="Peng C."/>
            <person name="Tan M."/>
            <person name="Dai L."/>
            <person name="Xie Z."/>
            <person name="Zhang Y."/>
            <person name="Zwaans B.M."/>
            <person name="Skinner M.E."/>
            <person name="Lombard D.B."/>
            <person name="Zhao Y."/>
        </authorList>
    </citation>
    <scope>SUCCINYLATION [LARGE SCALE ANALYSIS] AT LYS-237</scope>
    <scope>IDENTIFICATION BY MASS SPECTROMETRY [LARGE SCALE ANALYSIS]</scope>
    <source>
        <tissue>Embryonic fibroblast</tissue>
    </source>
</reference>
<reference key="9">
    <citation type="journal article" date="2014" name="Mol. Cell. Proteomics">
        <title>Immunoaffinity enrichment and mass spectrometry analysis of protein methylation.</title>
        <authorList>
            <person name="Guo A."/>
            <person name="Gu H."/>
            <person name="Zhou J."/>
            <person name="Mulhern D."/>
            <person name="Wang Y."/>
            <person name="Lee K.A."/>
            <person name="Yang V."/>
            <person name="Aguiar M."/>
            <person name="Kornhauser J."/>
            <person name="Jia X."/>
            <person name="Ren J."/>
            <person name="Beausoleil S.A."/>
            <person name="Silva J.C."/>
            <person name="Vemulapalli V."/>
            <person name="Bedford M.T."/>
            <person name="Comb M.J."/>
        </authorList>
    </citation>
    <scope>METHYLATION [LARGE SCALE ANALYSIS] AT ARG-54</scope>
    <scope>IDENTIFICATION BY MASS SPECTROMETRY [LARGE SCALE ANALYSIS]</scope>
    <source>
        <tissue>Embryo</tissue>
    </source>
</reference>
<sequence>MAVAVRALQEQLEKAKESLKNVDENIRKLTGRDPNDVRPIQARLLALSGPGGGRGRGSLLLRRGFSDSGGGPPAKQRDLEGAVSRLGGERRTRRESRQESDPEDDDVKKPALQSSVVATSKERTRDLIQDQNMDEKGKQRNRRIFGLLMGTLQKFKQESTVATERQKRRQEIEQKLEVQAEEERKQVENERRELFEERRAKQTELRLLEQKVELAQLQEEWNEHNAKIIKYIRTKTKPHLFYIPGRMCPATQKLIEESQRKMNALFEGRRIEFAEQINKMEARPRRQSMKEKEHQVVRNEEQKAEQEEGKVAQREEELEETGNQHNDVEVEEAGEEEEKEAGIVHSDAEKEQEEEEQKQEMEVKTEEEAEVREGEKQQDSQPEEVMDVLEMVESVKHVIAEQEVMETNQVESIEPSENETSKELEPEMEFDVEPDKECKSLSPGKENINSQEVEKESEEKEEKEEKEPEPQPEPVAQPQPPPQPLPQSQPHSQPHSQPQPVLQSQPLCQPETLPLAVLQPPPQVIQEQGNLLPERKDFPLESIKLPEVSVEPVLTVHSENKSKNKTRSRSRGRARNKTSKSRSRSSSSSSSSSSSTSSSSGSSSSSGSSSSRSSSSSSSSTSGSSSRDSSSSTSSSSESRSRSRGRGHNRDRKHRRSMDRKRRDTSGLERSHKSSKGGSSRDRKGSKDKSSRPDRKRSISESSRSGKRSSRSERDRKSDRKDKRR</sequence>
<organism>
    <name type="scientific">Mus musculus</name>
    <name type="common">Mouse</name>
    <dbReference type="NCBI Taxonomy" id="10090"/>
    <lineage>
        <taxon>Eukaryota</taxon>
        <taxon>Metazoa</taxon>
        <taxon>Chordata</taxon>
        <taxon>Craniata</taxon>
        <taxon>Vertebrata</taxon>
        <taxon>Euteleostomi</taxon>
        <taxon>Mammalia</taxon>
        <taxon>Eutheria</taxon>
        <taxon>Euarchontoglires</taxon>
        <taxon>Glires</taxon>
        <taxon>Rodentia</taxon>
        <taxon>Myomorpha</taxon>
        <taxon>Muroidea</taxon>
        <taxon>Muridae</taxon>
        <taxon>Murinae</taxon>
        <taxon>Mus</taxon>
        <taxon>Mus</taxon>
    </lineage>
</organism>
<accession>O35691</accession>
<accession>Q8CD89</accession>
<accession>Q8CGU3</accession>
<comment type="function">
    <text evidence="1">Transcriptional activator binding to the E-box 1 core sequence of the E-cadherin promoter gene; the core-binding sequence is 5'CAGGTG-3'. Capable of reversing CTBP1-mediated transcription repression. Auxiliary component of the splicing-dependent multiprotein exon junction complex (EJC) deposited at splice junction on mRNAs. The EJC is a dynamic structure consisting of core proteins and several peripheral nuclear and cytoplasmic associated factors that join the complex only transiently either during EJC assembly or during subsequent mRNA metabolism. Participates in the regulation of alternative pre-mRNA splicing. Associates to spliced mRNA within 60 nt upstream of the 5'-splice sites. Component of the PSAP complex which binds RNA in a sequence-independent manner and is proposed to be recruited to the EJC prior to or during the splicing process and to regulate specific excision of introns in specific transcription subsets. Involved in the establishment and maintenance of epithelia cell-cell adhesion (By similarity).</text>
</comment>
<comment type="subunit">
    <text evidence="1">Found in a mRNA splicing-dependent exon junction complex (EJC). Found in a complex with SR proteins. Found in a mRNP complex with RNPS1. Component of the PSAP complex consisting of RNPS1, SAP18 and PNN. Interacts with PNISR, CTBP1, CTBP2, KRT8, KRT18, KRT19, PS1D/PNO40, PPIG, RNPS1, SFRS4 and SRRM2. Identified in the spliceosome C complex (By similarity).</text>
</comment>
<comment type="subcellular location">
    <subcellularLocation>
        <location evidence="1">Nucleus speckle</location>
    </subcellularLocation>
    <subcellularLocation>
        <location evidence="1">Cell junction</location>
        <location evidence="1">Desmosome</location>
    </subcellularLocation>
    <text evidence="1">Cell-cell contact area, predominantly desmosome of intercellular adherens junction. Not a nucleocytoplasmic shuttling protein (By similarity).</text>
</comment>
<comment type="similarity">
    <text evidence="5">Belongs to the pinin family.</text>
</comment>
<proteinExistence type="evidence at protein level"/>
<feature type="initiator methionine" description="Removed" evidence="2">
    <location>
        <position position="1"/>
    </location>
</feature>
<feature type="chain" id="PRO_0000190243" description="Pinin">
    <location>
        <begin position="2"/>
        <end position="725"/>
    </location>
</feature>
<feature type="region of interest" description="Disordered" evidence="4">
    <location>
        <begin position="46"/>
        <end position="138"/>
    </location>
</feature>
<feature type="region of interest" description="Sufficient for PSAP complex assembly" evidence="1">
    <location>
        <begin position="220"/>
        <end position="283"/>
    </location>
</feature>
<feature type="region of interest" description="Disordered" evidence="4">
    <location>
        <begin position="278"/>
        <end position="521"/>
    </location>
</feature>
<feature type="region of interest" description="Disordered" evidence="4">
    <location>
        <begin position="545"/>
        <end position="725"/>
    </location>
</feature>
<feature type="coiled-coil region" evidence="3">
    <location>
        <begin position="2"/>
        <end position="32"/>
    </location>
</feature>
<feature type="coiled-coil region" evidence="3">
    <location>
        <begin position="162"/>
        <end position="233"/>
    </location>
</feature>
<feature type="coiled-coil region" evidence="3">
    <location>
        <begin position="286"/>
        <end position="373"/>
    </location>
</feature>
<feature type="coiled-coil region" evidence="3">
    <location>
        <begin position="444"/>
        <end position="467"/>
    </location>
</feature>
<feature type="compositionally biased region" description="Basic and acidic residues" evidence="4">
    <location>
        <begin position="87"/>
        <end position="100"/>
    </location>
</feature>
<feature type="compositionally biased region" description="Basic and acidic residues" evidence="4">
    <location>
        <begin position="120"/>
        <end position="138"/>
    </location>
</feature>
<feature type="compositionally biased region" description="Basic and acidic residues" evidence="4">
    <location>
        <begin position="278"/>
        <end position="315"/>
    </location>
</feature>
<feature type="compositionally biased region" description="Acidic residues" evidence="4">
    <location>
        <begin position="329"/>
        <end position="339"/>
    </location>
</feature>
<feature type="compositionally biased region" description="Basic and acidic residues" evidence="4">
    <location>
        <begin position="340"/>
        <end position="349"/>
    </location>
</feature>
<feature type="compositionally biased region" description="Basic and acidic residues" evidence="4">
    <location>
        <begin position="358"/>
        <end position="378"/>
    </location>
</feature>
<feature type="compositionally biased region" description="Basic and acidic residues" evidence="4">
    <location>
        <begin position="452"/>
        <end position="469"/>
    </location>
</feature>
<feature type="compositionally biased region" description="Pro residues" evidence="4">
    <location>
        <begin position="471"/>
        <end position="487"/>
    </location>
</feature>
<feature type="compositionally biased region" description="Low complexity" evidence="4">
    <location>
        <begin position="488"/>
        <end position="518"/>
    </location>
</feature>
<feature type="compositionally biased region" description="Basic residues" evidence="4">
    <location>
        <begin position="563"/>
        <end position="583"/>
    </location>
</feature>
<feature type="compositionally biased region" description="Low complexity" evidence="4">
    <location>
        <begin position="584"/>
        <end position="638"/>
    </location>
</feature>
<feature type="compositionally biased region" description="Basic residues" evidence="4">
    <location>
        <begin position="642"/>
        <end position="660"/>
    </location>
</feature>
<feature type="compositionally biased region" description="Basic and acidic residues" evidence="4">
    <location>
        <begin position="661"/>
        <end position="672"/>
    </location>
</feature>
<feature type="compositionally biased region" description="Basic and acidic residues" evidence="4">
    <location>
        <begin position="679"/>
        <end position="699"/>
    </location>
</feature>
<feature type="compositionally biased region" description="Basic and acidic residues" evidence="4">
    <location>
        <begin position="710"/>
        <end position="725"/>
    </location>
</feature>
<feature type="modified residue" description="N-acetylalanine" evidence="2">
    <location>
        <position position="2"/>
    </location>
</feature>
<feature type="modified residue" description="Phosphoserine" evidence="2">
    <location>
        <position position="48"/>
    </location>
</feature>
<feature type="modified residue" description="Omega-N-methylarginine" evidence="11">
    <location>
        <position position="54"/>
    </location>
</feature>
<feature type="modified residue" description="Phosphoserine" evidence="2">
    <location>
        <position position="58"/>
    </location>
</feature>
<feature type="modified residue" description="Phosphoserine" evidence="6 8 9">
    <location>
        <position position="66"/>
    </location>
</feature>
<feature type="modified residue" description="Phosphoserine" evidence="2">
    <location>
        <position position="96"/>
    </location>
</feature>
<feature type="modified residue" description="Phosphoserine" evidence="2">
    <location>
        <position position="100"/>
    </location>
</feature>
<feature type="modified residue" description="Phosphoserine" evidence="2">
    <location>
        <position position="114"/>
    </location>
</feature>
<feature type="modified residue" description="Phosphoserine" evidence="2">
    <location>
        <position position="115"/>
    </location>
</feature>
<feature type="modified residue" description="N6-acetyllysine; alternate" evidence="2">
    <location>
        <position position="237"/>
    </location>
</feature>
<feature type="modified residue" description="N6-succinyllysine; alternate" evidence="10">
    <location>
        <position position="237"/>
    </location>
</feature>
<feature type="modified residue" description="Phosphoserine" evidence="2">
    <location>
        <position position="346"/>
    </location>
</feature>
<feature type="modified residue" description="Phosphoserine" evidence="7 9">
    <location>
        <position position="380"/>
    </location>
</feature>
<feature type="modified residue" description="Phosphoserine" evidence="9">
    <location>
        <position position="442"/>
    </location>
</feature>
<feature type="modified residue" description="Phosphoserine" evidence="2">
    <location>
        <position position="666"/>
    </location>
</feature>
<feature type="modified residue" description="Phosphoserine" evidence="2">
    <location>
        <position position="700"/>
    </location>
</feature>
<feature type="modified residue" description="Phosphoserine" evidence="2">
    <location>
        <position position="703"/>
    </location>
</feature>
<feature type="cross-link" description="Glycyl lysine isopeptide (Lys-Gly) (interchain with G-Cter in SUMO2)" evidence="2">
    <location>
        <position position="109"/>
    </location>
</feature>
<feature type="cross-link" description="Glycyl lysine isopeptide (Lys-Gly) (interchain with G-Cter in SUMO2)" evidence="2">
    <location>
        <position position="121"/>
    </location>
</feature>
<feature type="cross-link" description="Glycyl lysine isopeptide (Lys-Gly) (interchain with G-Cter in SUMO2)" evidence="2">
    <location>
        <position position="136"/>
    </location>
</feature>
<feature type="cross-link" description="Glycyl lysine isopeptide (Lys-Gly) (interchain with G-Cter in SUMO2)" evidence="2">
    <location>
        <position position="154"/>
    </location>
</feature>
<feature type="cross-link" description="Glycyl lysine isopeptide (Lys-Gly) (interchain with G-Cter in SUMO1); alternate" evidence="2">
    <location>
        <position position="156"/>
    </location>
</feature>
<feature type="cross-link" description="Glycyl lysine isopeptide (Lys-Gly) (interchain with G-Cter in SUMO2); alternate" evidence="2">
    <location>
        <position position="156"/>
    </location>
</feature>
<feature type="cross-link" description="Glycyl lysine isopeptide (Lys-Gly) (interchain with G-Cter in SUMO2)" evidence="2">
    <location>
        <position position="227"/>
    </location>
</feature>
<feature type="cross-link" description="Glycyl lysine isopeptide (Lys-Gly) (interchain with G-Cter in SUMO2)" evidence="2">
    <location>
        <position position="279"/>
    </location>
</feature>
<feature type="cross-link" description="Glycyl lysine isopeptide (Lys-Gly) (interchain with G-Cter in SUMO2)" evidence="2">
    <location>
        <position position="303"/>
    </location>
</feature>
<feature type="cross-link" description="Glycyl lysine isopeptide (Lys-Gly) (interchain with G-Cter in SUMO2)" evidence="2">
    <location>
        <position position="310"/>
    </location>
</feature>
<feature type="cross-link" description="Glycyl lysine isopeptide (Lys-Gly) (interchain with G-Cter in SUMO2)" evidence="2">
    <location>
        <position position="358"/>
    </location>
</feature>
<feature type="cross-link" description="Glycyl lysine isopeptide (Lys-Gly) (interchain with G-Cter in SUMO2)" evidence="2">
    <location>
        <position position="364"/>
    </location>
</feature>
<feature type="cross-link" description="Glycyl lysine isopeptide (Lys-Gly) (interchain with G-Cter in SUMO2)" evidence="2">
    <location>
        <position position="536"/>
    </location>
</feature>
<feature type="cross-link" description="Glycyl lysine isopeptide (Lys-Gly) (interchain with G-Cter in SUMO2)" evidence="2">
    <location>
        <position position="544"/>
    </location>
</feature>
<feature type="cross-link" description="Glycyl lysine isopeptide (Lys-Gly) (interchain with G-Cter in SUMO2)" evidence="2">
    <location>
        <position position="561"/>
    </location>
</feature>
<feature type="sequence conflict" description="In Ref. 2; AAN05017." evidence="5" ref="2">
    <original>G</original>
    <variation>A</variation>
    <location>
        <position position="31"/>
    </location>
</feature>
<feature type="sequence conflict" description="In Ref. 1; CAA69960." evidence="5" ref="1">
    <original>AR</original>
    <variation>GT</variation>
    <location>
        <begin position="42"/>
        <end position="43"/>
    </location>
</feature>
<feature type="sequence conflict" description="In Ref. 3; BAC27200." evidence="5" ref="3">
    <original>R</original>
    <variation>RR</variation>
    <location>
        <position position="125"/>
    </location>
</feature>
<feature type="sequence conflict" description="In Ref. 2; AAN05017." evidence="5" ref="2">
    <original>QL</original>
    <variation>HV</variation>
    <location>
        <begin position="216"/>
        <end position="217"/>
    </location>
</feature>
<feature type="sequence conflict" description="In Ref. 1; CAA69960." evidence="5" ref="1">
    <original>Q</original>
    <variation>P</variation>
    <location>
        <position position="287"/>
    </location>
</feature>
<feature type="sequence conflict" description="In Ref. 2; AAN05017." evidence="5" ref="2">
    <original>D</original>
    <variation>H</variation>
    <location>
        <position position="327"/>
    </location>
</feature>
<feature type="sequence conflict" description="In Ref. 1; CAA69960." evidence="5" ref="1">
    <original>T</original>
    <variation>I</variation>
    <location>
        <position position="365"/>
    </location>
</feature>
<feature type="sequence conflict" description="In Ref. 3; BAC27200." evidence="5" ref="3">
    <original>M</original>
    <variation>V</variation>
    <location>
        <position position="658"/>
    </location>
</feature>
<feature type="sequence conflict" description="In Ref. 3; BAC27200." evidence="5" ref="3">
    <original>R</original>
    <variation>T</variation>
    <location>
        <position position="683"/>
    </location>
</feature>
<name>PININ_MOUSE</name>
<gene>
    <name type="primary">Pnn</name>
</gene>